<comment type="function">
    <text evidence="1">The beta subunit is responsible for the synthesis of L-tryptophan from indole and L-serine.</text>
</comment>
<comment type="catalytic activity">
    <reaction>
        <text>(1S,2R)-1-C-(indol-3-yl)glycerol 3-phosphate + L-serine = D-glyceraldehyde 3-phosphate + L-tryptophan + H2O</text>
        <dbReference type="Rhea" id="RHEA:10532"/>
        <dbReference type="ChEBI" id="CHEBI:15377"/>
        <dbReference type="ChEBI" id="CHEBI:33384"/>
        <dbReference type="ChEBI" id="CHEBI:57912"/>
        <dbReference type="ChEBI" id="CHEBI:58866"/>
        <dbReference type="ChEBI" id="CHEBI:59776"/>
        <dbReference type="EC" id="4.2.1.20"/>
    </reaction>
</comment>
<comment type="cofactor">
    <cofactor evidence="1">
        <name>pyridoxal 5'-phosphate</name>
        <dbReference type="ChEBI" id="CHEBI:597326"/>
    </cofactor>
</comment>
<comment type="pathway">
    <text>Amino-acid biosynthesis; L-tryptophan biosynthesis; L-tryptophan from chorismate: step 5/5.</text>
</comment>
<comment type="subunit">
    <text evidence="1">Tetramer of two alpha and two beta chains.</text>
</comment>
<comment type="similarity">
    <text evidence="2">Belongs to the TrpB family.</text>
</comment>
<comment type="caution">
    <text evidence="2">This TrpB is highly divergent compared to other bacterial TrpB. As C.trachomatis seems to have lost part of the Trp biosynthetic operon, it is possible that this protein is not active.</text>
</comment>
<accession>O84172</accession>
<keyword id="KW-0002">3D-structure</keyword>
<keyword id="KW-0028">Amino-acid biosynthesis</keyword>
<keyword id="KW-0057">Aromatic amino acid biosynthesis</keyword>
<keyword id="KW-0456">Lyase</keyword>
<keyword id="KW-0663">Pyridoxal phosphate</keyword>
<keyword id="KW-1185">Reference proteome</keyword>
<keyword id="KW-0822">Tryptophan biosynthesis</keyword>
<gene>
    <name type="primary">trpB</name>
    <name type="ordered locus">CT_170</name>
</gene>
<protein>
    <recommendedName>
        <fullName>Tryptophan synthase beta chain</fullName>
        <ecNumber>4.2.1.20</ecNumber>
    </recommendedName>
</protein>
<evidence type="ECO:0000250" key="1"/>
<evidence type="ECO:0000305" key="2"/>
<evidence type="ECO:0007829" key="3">
    <source>
        <dbReference type="PDB" id="6V82"/>
    </source>
</evidence>
<organism>
    <name type="scientific">Chlamydia trachomatis serovar D (strain ATCC VR-885 / DSM 19411 / UW-3/Cx)</name>
    <dbReference type="NCBI Taxonomy" id="272561"/>
    <lineage>
        <taxon>Bacteria</taxon>
        <taxon>Pseudomonadati</taxon>
        <taxon>Chlamydiota</taxon>
        <taxon>Chlamydiia</taxon>
        <taxon>Chlamydiales</taxon>
        <taxon>Chlamydiaceae</taxon>
        <taxon>Chlamydia/Chlamydophila group</taxon>
        <taxon>Chlamydia</taxon>
    </lineage>
</organism>
<dbReference type="EC" id="4.2.1.20"/>
<dbReference type="EMBL" id="AE001273">
    <property type="protein sequence ID" value="AAC67761.1"/>
    <property type="molecule type" value="Genomic_DNA"/>
</dbReference>
<dbReference type="PIR" id="A71547">
    <property type="entry name" value="A71547"/>
</dbReference>
<dbReference type="RefSeq" id="NP_219673.1">
    <property type="nucleotide sequence ID" value="NC_000117.1"/>
</dbReference>
<dbReference type="RefSeq" id="WP_009873061.1">
    <property type="nucleotide sequence ID" value="NC_000117.1"/>
</dbReference>
<dbReference type="PDB" id="6V82">
    <property type="method" value="X-ray"/>
    <property type="resolution" value="2.42 A"/>
    <property type="chains" value="B=1-392"/>
</dbReference>
<dbReference type="PDBsum" id="6V82"/>
<dbReference type="SMR" id="O84172"/>
<dbReference type="FunCoup" id="O84172">
    <property type="interactions" value="234"/>
</dbReference>
<dbReference type="STRING" id="272561.CT_170"/>
<dbReference type="EnsemblBacteria" id="AAC67761">
    <property type="protein sequence ID" value="AAC67761"/>
    <property type="gene ID" value="CT_170"/>
</dbReference>
<dbReference type="GeneID" id="884961"/>
<dbReference type="KEGG" id="ctr:CT_170"/>
<dbReference type="PATRIC" id="fig|272561.5.peg.183"/>
<dbReference type="HOGENOM" id="CLU_016734_3_1_0"/>
<dbReference type="InParanoid" id="O84172"/>
<dbReference type="OrthoDB" id="9766131at2"/>
<dbReference type="UniPathway" id="UPA00035">
    <property type="reaction ID" value="UER00044"/>
</dbReference>
<dbReference type="Proteomes" id="UP000000431">
    <property type="component" value="Chromosome"/>
</dbReference>
<dbReference type="GO" id="GO:0005737">
    <property type="term" value="C:cytoplasm"/>
    <property type="evidence" value="ECO:0000318"/>
    <property type="project" value="GO_Central"/>
</dbReference>
<dbReference type="GO" id="GO:0004834">
    <property type="term" value="F:tryptophan synthase activity"/>
    <property type="evidence" value="ECO:0007669"/>
    <property type="project" value="UniProtKB-UniRule"/>
</dbReference>
<dbReference type="GO" id="GO:0000162">
    <property type="term" value="P:L-tryptophan biosynthetic process"/>
    <property type="evidence" value="ECO:0000318"/>
    <property type="project" value="GO_Central"/>
</dbReference>
<dbReference type="CDD" id="cd06446">
    <property type="entry name" value="Trp-synth_B"/>
    <property type="match status" value="1"/>
</dbReference>
<dbReference type="FunFam" id="3.40.50.1100:FF:000001">
    <property type="entry name" value="Tryptophan synthase beta chain"/>
    <property type="match status" value="1"/>
</dbReference>
<dbReference type="FunFam" id="3.40.50.1100:FF:000004">
    <property type="entry name" value="Tryptophan synthase beta chain"/>
    <property type="match status" value="1"/>
</dbReference>
<dbReference type="Gene3D" id="3.40.50.1100">
    <property type="match status" value="2"/>
</dbReference>
<dbReference type="HAMAP" id="MF_00133">
    <property type="entry name" value="Trp_synth_beta"/>
    <property type="match status" value="1"/>
</dbReference>
<dbReference type="InterPro" id="IPR006653">
    <property type="entry name" value="Trp_synth_b_CS"/>
</dbReference>
<dbReference type="InterPro" id="IPR006654">
    <property type="entry name" value="Trp_synth_beta"/>
</dbReference>
<dbReference type="InterPro" id="IPR023026">
    <property type="entry name" value="Trp_synth_beta/beta-like"/>
</dbReference>
<dbReference type="InterPro" id="IPR001926">
    <property type="entry name" value="TrpB-like_PALP"/>
</dbReference>
<dbReference type="InterPro" id="IPR036052">
    <property type="entry name" value="TrpB-like_PALP_sf"/>
</dbReference>
<dbReference type="NCBIfam" id="TIGR00263">
    <property type="entry name" value="trpB"/>
    <property type="match status" value="1"/>
</dbReference>
<dbReference type="PANTHER" id="PTHR48077:SF3">
    <property type="entry name" value="TRYPTOPHAN SYNTHASE"/>
    <property type="match status" value="1"/>
</dbReference>
<dbReference type="PANTHER" id="PTHR48077">
    <property type="entry name" value="TRYPTOPHAN SYNTHASE-RELATED"/>
    <property type="match status" value="1"/>
</dbReference>
<dbReference type="Pfam" id="PF00291">
    <property type="entry name" value="PALP"/>
    <property type="match status" value="1"/>
</dbReference>
<dbReference type="PIRSF" id="PIRSF001413">
    <property type="entry name" value="Trp_syn_beta"/>
    <property type="match status" value="1"/>
</dbReference>
<dbReference type="SUPFAM" id="SSF53686">
    <property type="entry name" value="Tryptophan synthase beta subunit-like PLP-dependent enzymes"/>
    <property type="match status" value="1"/>
</dbReference>
<dbReference type="PROSITE" id="PS00168">
    <property type="entry name" value="TRP_SYNTHASE_BETA"/>
    <property type="match status" value="1"/>
</dbReference>
<proteinExistence type="evidence at protein level"/>
<reference key="1">
    <citation type="journal article" date="1998" name="Science">
        <title>Genome sequence of an obligate intracellular pathogen of humans: Chlamydia trachomatis.</title>
        <authorList>
            <person name="Stephens R.S."/>
            <person name="Kalman S."/>
            <person name="Lammel C.J."/>
            <person name="Fan J."/>
            <person name="Marathe R."/>
            <person name="Aravind L."/>
            <person name="Mitchell W.P."/>
            <person name="Olinger L."/>
            <person name="Tatusov R.L."/>
            <person name="Zhao Q."/>
            <person name="Koonin E.V."/>
            <person name="Davis R.W."/>
        </authorList>
    </citation>
    <scope>NUCLEOTIDE SEQUENCE [LARGE SCALE GENOMIC DNA]</scope>
    <source>
        <strain>ATCC VR-885 / DSM 19411 / UW-3/Cx</strain>
    </source>
</reference>
<feature type="chain" id="PRO_0000098941" description="Tryptophan synthase beta chain">
    <location>
        <begin position="1"/>
        <end position="392"/>
    </location>
</feature>
<feature type="modified residue" description="N6-(pyridoxal phosphate)lysine" evidence="1">
    <location>
        <position position="84"/>
    </location>
</feature>
<feature type="helix" evidence="3">
    <location>
        <begin position="15"/>
        <end position="17"/>
    </location>
</feature>
<feature type="helix" evidence="3">
    <location>
        <begin position="18"/>
        <end position="31"/>
    </location>
</feature>
<feature type="helix" evidence="3">
    <location>
        <begin position="35"/>
        <end position="47"/>
    </location>
</feature>
<feature type="strand" evidence="3">
    <location>
        <begin position="55"/>
        <end position="57"/>
    </location>
</feature>
<feature type="helix" evidence="3">
    <location>
        <begin position="59"/>
        <end position="64"/>
    </location>
</feature>
<feature type="strand" evidence="3">
    <location>
        <begin position="68"/>
        <end position="73"/>
    </location>
</feature>
<feature type="helix" evidence="3">
    <location>
        <begin position="75"/>
        <end position="77"/>
    </location>
</feature>
<feature type="helix" evidence="3">
    <location>
        <begin position="79"/>
        <end position="81"/>
    </location>
</feature>
<feature type="helix" evidence="3">
    <location>
        <begin position="86"/>
        <end position="97"/>
    </location>
</feature>
<feature type="strand" evidence="3">
    <location>
        <begin position="102"/>
        <end position="106"/>
    </location>
</feature>
<feature type="strand" evidence="3">
    <location>
        <begin position="108"/>
        <end position="110"/>
    </location>
</feature>
<feature type="helix" evidence="3">
    <location>
        <begin position="111"/>
        <end position="123"/>
    </location>
</feature>
<feature type="strand" evidence="3">
    <location>
        <begin position="126"/>
        <end position="132"/>
    </location>
</feature>
<feature type="helix" evidence="3">
    <location>
        <begin position="133"/>
        <end position="138"/>
    </location>
</feature>
<feature type="helix" evidence="3">
    <location>
        <begin position="140"/>
        <end position="148"/>
    </location>
</feature>
<feature type="strand" evidence="3">
    <location>
        <begin position="152"/>
        <end position="156"/>
    </location>
</feature>
<feature type="helix" evidence="3">
    <location>
        <begin position="163"/>
        <end position="177"/>
    </location>
</feature>
<feature type="turn" evidence="3">
    <location>
        <begin position="178"/>
        <end position="180"/>
    </location>
</feature>
<feature type="strand" evidence="3">
    <location>
        <begin position="181"/>
        <end position="183"/>
    </location>
</feature>
<feature type="helix" evidence="3">
    <location>
        <begin position="194"/>
        <end position="202"/>
    </location>
</feature>
<feature type="helix" evidence="3">
    <location>
        <begin position="204"/>
        <end position="217"/>
    </location>
</feature>
<feature type="strand" evidence="3">
    <location>
        <begin position="222"/>
        <end position="227"/>
    </location>
</feature>
<feature type="strand" evidence="3">
    <location>
        <begin position="229"/>
        <end position="231"/>
    </location>
</feature>
<feature type="helix" evidence="3">
    <location>
        <begin position="232"/>
        <end position="238"/>
    </location>
</feature>
<feature type="helix" evidence="3">
    <location>
        <begin position="239"/>
        <end position="241"/>
    </location>
</feature>
<feature type="strand" evidence="3">
    <location>
        <begin position="247"/>
        <end position="254"/>
    </location>
</feature>
<feature type="helix" evidence="3">
    <location>
        <begin position="259"/>
        <end position="261"/>
    </location>
</feature>
<feature type="helix" evidence="3">
    <location>
        <begin position="267"/>
        <end position="270"/>
    </location>
</feature>
<feature type="strand" evidence="3">
    <location>
        <begin position="272"/>
        <end position="276"/>
    </location>
</feature>
<feature type="strand" evidence="3">
    <location>
        <begin position="279"/>
        <end position="283"/>
    </location>
</feature>
<feature type="helix" evidence="3">
    <location>
        <begin position="299"/>
        <end position="301"/>
    </location>
</feature>
<feature type="helix" evidence="3">
    <location>
        <begin position="308"/>
        <end position="315"/>
    </location>
</feature>
<feature type="strand" evidence="3">
    <location>
        <begin position="318"/>
        <end position="324"/>
    </location>
</feature>
<feature type="helix" evidence="3">
    <location>
        <begin position="326"/>
        <end position="340"/>
    </location>
</feature>
<feature type="helix" evidence="3">
    <location>
        <begin position="346"/>
        <end position="358"/>
    </location>
</feature>
<feature type="helix" evidence="3">
    <location>
        <begin position="359"/>
        <end position="361"/>
    </location>
</feature>
<feature type="strand" evidence="3">
    <location>
        <begin position="367"/>
        <end position="371"/>
    </location>
</feature>
<feature type="helix" evidence="3">
    <location>
        <begin position="377"/>
        <end position="379"/>
    </location>
</feature>
<feature type="helix" evidence="3">
    <location>
        <begin position="380"/>
        <end position="386"/>
    </location>
</feature>
<name>TRPB_CHLTR</name>
<sequence>MFKHKHPFGGAFLPEELLAPIQNLKAEWEILKTQQSFLSELDCILKNYAGRQTPLTEVKNFARAIDGPRVFLKREDLLHTGAHKLNNALGQCLLAKYLGKTRVVAETGAGQHGVATATACAYLGLDCVVYMGAKDVERQKPNVEKMRFLGAEVVSVTKGSCGLKDAVNQALQDWATTHSFTHYCLGSALGPLPYPDIVRFFQSVISAEVKEQIHAVAGRDPDILIACIGGGSNAIGFFHHFIPNPKVQLIGVEGGGLGISSGKHAARFATGRPGVFHGFYSYLLQDDDGQVLQTHSISAGLDYPSVGPDHAEMHESGRAFYTLATDEEALRAFFLLTRNEGIIPALESSHALAHLVSIAPSLPKEQIVIVNLSGRGDKDLPQIIRRNRGIYE</sequence>